<keyword id="KW-1003">Cell membrane</keyword>
<keyword id="KW-0418">Kinase</keyword>
<keyword id="KW-0472">Membrane</keyword>
<keyword id="KW-0598">Phosphotransferase system</keyword>
<keyword id="KW-1185">Reference proteome</keyword>
<keyword id="KW-0762">Sugar transport</keyword>
<keyword id="KW-0808">Transferase</keyword>
<keyword id="KW-0812">Transmembrane</keyword>
<keyword id="KW-1133">Transmembrane helix</keyword>
<keyword id="KW-0813">Transport</keyword>
<evidence type="ECO:0000255" key="1">
    <source>
        <dbReference type="PROSITE-ProRule" id="PRU00421"/>
    </source>
</evidence>
<evidence type="ECO:0000255" key="2">
    <source>
        <dbReference type="PROSITE-ProRule" id="PRU00426"/>
    </source>
</evidence>
<evidence type="ECO:0000269" key="3">
    <source>
    </source>
</evidence>
<evidence type="ECO:0000269" key="4">
    <source>
    </source>
</evidence>
<evidence type="ECO:0000305" key="5"/>
<organism>
    <name type="scientific">Bacillus subtilis (strain 168)</name>
    <dbReference type="NCBI Taxonomy" id="224308"/>
    <lineage>
        <taxon>Bacteria</taxon>
        <taxon>Bacillati</taxon>
        <taxon>Bacillota</taxon>
        <taxon>Bacilli</taxon>
        <taxon>Bacillales</taxon>
        <taxon>Bacillaceae</taxon>
        <taxon>Bacillus</taxon>
    </lineage>
</organism>
<feature type="chain" id="PRO_0000186692" description="Probable PTS system sucrose-specific EIIBC component">
    <location>
        <begin position="1"/>
        <end position="459"/>
    </location>
</feature>
<feature type="transmembrane region" description="Helical" evidence="2">
    <location>
        <begin position="111"/>
        <end position="131"/>
    </location>
</feature>
<feature type="transmembrane region" description="Helical" evidence="2">
    <location>
        <begin position="147"/>
        <end position="167"/>
    </location>
</feature>
<feature type="transmembrane region" description="Helical" evidence="2">
    <location>
        <begin position="177"/>
        <end position="197"/>
    </location>
</feature>
<feature type="transmembrane region" description="Helical" evidence="2">
    <location>
        <begin position="209"/>
        <end position="229"/>
    </location>
</feature>
<feature type="transmembrane region" description="Helical" evidence="2">
    <location>
        <begin position="245"/>
        <end position="265"/>
    </location>
</feature>
<feature type="transmembrane region" description="Helical" evidence="2">
    <location>
        <begin position="288"/>
        <end position="308"/>
    </location>
</feature>
<feature type="transmembrane region" description="Helical" evidence="2">
    <location>
        <begin position="329"/>
        <end position="349"/>
    </location>
</feature>
<feature type="transmembrane region" description="Helical" evidence="2">
    <location>
        <begin position="360"/>
        <end position="380"/>
    </location>
</feature>
<feature type="transmembrane region" description="Helical" evidence="2">
    <location>
        <begin position="388"/>
        <end position="408"/>
    </location>
</feature>
<feature type="transmembrane region" description="Helical" evidence="2">
    <location>
        <begin position="412"/>
        <end position="432"/>
    </location>
</feature>
<feature type="transmembrane region" description="Helical" evidence="2">
    <location>
        <begin position="434"/>
        <end position="454"/>
    </location>
</feature>
<feature type="domain" description="PTS EIIB type-1" evidence="1">
    <location>
        <begin position="1"/>
        <end position="86"/>
    </location>
</feature>
<feature type="domain" description="PTS EIIC type-1" evidence="2">
    <location>
        <begin position="106"/>
        <end position="459"/>
    </location>
</feature>
<feature type="active site" description="Phosphocysteine intermediate; for EIIB activity" evidence="1">
    <location>
        <position position="25"/>
    </location>
</feature>
<protein>
    <recommendedName>
        <fullName evidence="5">Probable PTS system sucrose-specific EIIBC component</fullName>
    </recommendedName>
    <alternativeName>
        <fullName>Negative regulator of SacY activity</fullName>
    </alternativeName>
    <domain>
        <recommendedName>
            <fullName>Phosphotransferase enzyme IIB component</fullName>
            <ecNumber evidence="1">2.7.1.-</ecNumber>
        </recommendedName>
        <alternativeName>
            <fullName>PTS system EIIB component</fullName>
        </alternativeName>
    </domain>
    <domain>
        <recommendedName>
            <fullName>Permease IIC component</fullName>
        </recommendedName>
        <alternativeName>
            <fullName>PTS system EIIC component</fullName>
        </alternativeName>
    </domain>
</protein>
<name>SACX_BACSU</name>
<gene>
    <name type="primary">sacX</name>
    <name type="synonym">sacS</name>
    <name type="ordered locus">BSU38410</name>
    <name type="ORF">ipa-14r</name>
</gene>
<reference key="1">
    <citation type="journal article" date="1990" name="Gene">
        <title>Nucleotide sequence of the sacS locus of Bacillus subtilis reveals the presence of two regulatory genes.</title>
        <authorList>
            <person name="Zukowski M.M."/>
            <person name="Miller L."/>
            <person name="Cosgwell P."/>
            <person name="Chen K."/>
            <person name="Aymerich S."/>
            <person name="Steinmetz M."/>
        </authorList>
    </citation>
    <scope>NUCLEOTIDE SEQUENCE [GENOMIC DNA]</scope>
</reference>
<reference key="2">
    <citation type="journal article" date="1993" name="Mol. Microbiol.">
        <title>Bacillus subtilis genome project: cloning and sequencing of the 97 kb region from 325 degrees to 333 degrees.</title>
        <authorList>
            <person name="Glaser P."/>
            <person name="Kunst F."/>
            <person name="Arnaud M."/>
            <person name="Coudart M.P."/>
            <person name="Gonzales W."/>
            <person name="Hullo M.-F."/>
            <person name="Ionescu M."/>
            <person name="Lubochinsky B."/>
            <person name="Marcelino L."/>
            <person name="Moszer I."/>
            <person name="Presecan E."/>
            <person name="Santana M."/>
            <person name="Schneider E."/>
            <person name="Schweizer J."/>
            <person name="Vertes A."/>
            <person name="Rapoport G."/>
            <person name="Danchin A."/>
        </authorList>
    </citation>
    <scope>NUCLEOTIDE SEQUENCE [GENOMIC DNA]</scope>
    <source>
        <strain>168</strain>
    </source>
</reference>
<reference key="3">
    <citation type="journal article" date="1997" name="Nature">
        <title>The complete genome sequence of the Gram-positive bacterium Bacillus subtilis.</title>
        <authorList>
            <person name="Kunst F."/>
            <person name="Ogasawara N."/>
            <person name="Moszer I."/>
            <person name="Albertini A.M."/>
            <person name="Alloni G."/>
            <person name="Azevedo V."/>
            <person name="Bertero M.G."/>
            <person name="Bessieres P."/>
            <person name="Bolotin A."/>
            <person name="Borchert S."/>
            <person name="Borriss R."/>
            <person name="Boursier L."/>
            <person name="Brans A."/>
            <person name="Braun M."/>
            <person name="Brignell S.C."/>
            <person name="Bron S."/>
            <person name="Brouillet S."/>
            <person name="Bruschi C.V."/>
            <person name="Caldwell B."/>
            <person name="Capuano V."/>
            <person name="Carter N.M."/>
            <person name="Choi S.-K."/>
            <person name="Codani J.-J."/>
            <person name="Connerton I.F."/>
            <person name="Cummings N.J."/>
            <person name="Daniel R.A."/>
            <person name="Denizot F."/>
            <person name="Devine K.M."/>
            <person name="Duesterhoeft A."/>
            <person name="Ehrlich S.D."/>
            <person name="Emmerson P.T."/>
            <person name="Entian K.-D."/>
            <person name="Errington J."/>
            <person name="Fabret C."/>
            <person name="Ferrari E."/>
            <person name="Foulger D."/>
            <person name="Fritz C."/>
            <person name="Fujita M."/>
            <person name="Fujita Y."/>
            <person name="Fuma S."/>
            <person name="Galizzi A."/>
            <person name="Galleron N."/>
            <person name="Ghim S.-Y."/>
            <person name="Glaser P."/>
            <person name="Goffeau A."/>
            <person name="Golightly E.J."/>
            <person name="Grandi G."/>
            <person name="Guiseppi G."/>
            <person name="Guy B.J."/>
            <person name="Haga K."/>
            <person name="Haiech J."/>
            <person name="Harwood C.R."/>
            <person name="Henaut A."/>
            <person name="Hilbert H."/>
            <person name="Holsappel S."/>
            <person name="Hosono S."/>
            <person name="Hullo M.-F."/>
            <person name="Itaya M."/>
            <person name="Jones L.-M."/>
            <person name="Joris B."/>
            <person name="Karamata D."/>
            <person name="Kasahara Y."/>
            <person name="Klaerr-Blanchard M."/>
            <person name="Klein C."/>
            <person name="Kobayashi Y."/>
            <person name="Koetter P."/>
            <person name="Koningstein G."/>
            <person name="Krogh S."/>
            <person name="Kumano M."/>
            <person name="Kurita K."/>
            <person name="Lapidus A."/>
            <person name="Lardinois S."/>
            <person name="Lauber J."/>
            <person name="Lazarevic V."/>
            <person name="Lee S.-M."/>
            <person name="Levine A."/>
            <person name="Liu H."/>
            <person name="Masuda S."/>
            <person name="Mauel C."/>
            <person name="Medigue C."/>
            <person name="Medina N."/>
            <person name="Mellado R.P."/>
            <person name="Mizuno M."/>
            <person name="Moestl D."/>
            <person name="Nakai S."/>
            <person name="Noback M."/>
            <person name="Noone D."/>
            <person name="O'Reilly M."/>
            <person name="Ogawa K."/>
            <person name="Ogiwara A."/>
            <person name="Oudega B."/>
            <person name="Park S.-H."/>
            <person name="Parro V."/>
            <person name="Pohl T.M."/>
            <person name="Portetelle D."/>
            <person name="Porwollik S."/>
            <person name="Prescott A.M."/>
            <person name="Presecan E."/>
            <person name="Pujic P."/>
            <person name="Purnelle B."/>
            <person name="Rapoport G."/>
            <person name="Rey M."/>
            <person name="Reynolds S."/>
            <person name="Rieger M."/>
            <person name="Rivolta C."/>
            <person name="Rocha E."/>
            <person name="Roche B."/>
            <person name="Rose M."/>
            <person name="Sadaie Y."/>
            <person name="Sato T."/>
            <person name="Scanlan E."/>
            <person name="Schleich S."/>
            <person name="Schroeter R."/>
            <person name="Scoffone F."/>
            <person name="Sekiguchi J."/>
            <person name="Sekowska A."/>
            <person name="Seror S.J."/>
            <person name="Serror P."/>
            <person name="Shin B.-S."/>
            <person name="Soldo B."/>
            <person name="Sorokin A."/>
            <person name="Tacconi E."/>
            <person name="Takagi T."/>
            <person name="Takahashi H."/>
            <person name="Takemaru K."/>
            <person name="Takeuchi M."/>
            <person name="Tamakoshi A."/>
            <person name="Tanaka T."/>
            <person name="Terpstra P."/>
            <person name="Tognoni A."/>
            <person name="Tosato V."/>
            <person name="Uchiyama S."/>
            <person name="Vandenbol M."/>
            <person name="Vannier F."/>
            <person name="Vassarotti A."/>
            <person name="Viari A."/>
            <person name="Wambutt R."/>
            <person name="Wedler E."/>
            <person name="Wedler H."/>
            <person name="Weitzenegger T."/>
            <person name="Winters P."/>
            <person name="Wipat A."/>
            <person name="Yamamoto H."/>
            <person name="Yamane K."/>
            <person name="Yasumoto K."/>
            <person name="Yata K."/>
            <person name="Yoshida K."/>
            <person name="Yoshikawa H.-F."/>
            <person name="Zumstein E."/>
            <person name="Yoshikawa H."/>
            <person name="Danchin A."/>
        </authorList>
    </citation>
    <scope>NUCLEOTIDE SEQUENCE [LARGE SCALE GENOMIC DNA]</scope>
    <source>
        <strain>168</strain>
    </source>
</reference>
<reference key="4">
    <citation type="journal article" date="1991" name="DNA Seq.">
        <title>A gene encoding a tyrosine tRNA synthetase is located near sacS in Bacillus subtilis.</title>
        <authorList>
            <person name="Glaser P."/>
            <person name="Kunst F."/>
            <person name="Debarbouille M."/>
            <person name="Vertes A."/>
            <person name="Danchin A."/>
            <person name="Dedonder R."/>
        </authorList>
    </citation>
    <scope>NUCLEOTIDE SEQUENCE [GENOMIC DNA] OF 348-459</scope>
    <source>
        <strain>168</strain>
    </source>
</reference>
<reference key="5">
    <citation type="journal article" date="2001" name="Mol. Microbiol.">
        <title>Sites of positive and negative regulation in the Bacillus subtilis antiterminators LicT and SacY.</title>
        <authorList>
            <person name="Tortosa P."/>
            <person name="Declerck N."/>
            <person name="Dutartre H."/>
            <person name="Lindner C."/>
            <person name="Deutscher J."/>
            <person name="Le Coq D."/>
        </authorList>
    </citation>
    <scope>FUNCTION AS A REGULATOR OF SACY</scope>
</reference>
<reference key="6">
    <citation type="journal article" date="2018" name="J. Bacteriol.">
        <title>Cross talk among transporters of the phosphoenolpyruvate-dependent phosphotransferase system in Bacillus subtilis.</title>
        <authorList>
            <person name="Morabbi Heravi K."/>
            <person name="Altenbuchner J."/>
        </authorList>
    </citation>
    <scope>FUNCTION</scope>
</reference>
<proteinExistence type="evidence at protein level"/>
<dbReference type="EC" id="2.7.1.-" evidence="1"/>
<dbReference type="EMBL" id="M29333">
    <property type="protein sequence ID" value="AAA75335.1"/>
    <property type="molecule type" value="Genomic_DNA"/>
</dbReference>
<dbReference type="EMBL" id="X73124">
    <property type="protein sequence ID" value="CAA51570.1"/>
    <property type="molecule type" value="Genomic_DNA"/>
</dbReference>
<dbReference type="EMBL" id="AL009126">
    <property type="protein sequence ID" value="CAB15867.1"/>
    <property type="molecule type" value="Genomic_DNA"/>
</dbReference>
<dbReference type="EMBL" id="X52480">
    <property type="protein sequence ID" value="CAA36719.1"/>
    <property type="molecule type" value="Genomic_DNA"/>
</dbReference>
<dbReference type="PIR" id="JU0293">
    <property type="entry name" value="JU0293"/>
</dbReference>
<dbReference type="RefSeq" id="NP_391720.1">
    <property type="nucleotide sequence ID" value="NC_000964.3"/>
</dbReference>
<dbReference type="RefSeq" id="WP_003243800.1">
    <property type="nucleotide sequence ID" value="NZ_OZ025638.1"/>
</dbReference>
<dbReference type="SMR" id="P15400"/>
<dbReference type="FunCoup" id="P15400">
    <property type="interactions" value="67"/>
</dbReference>
<dbReference type="STRING" id="224308.BSU38410"/>
<dbReference type="TCDB" id="4.A.1.2.10">
    <property type="family name" value="the pts glucose-glucoside (glc) family"/>
</dbReference>
<dbReference type="PaxDb" id="224308-BSU38410"/>
<dbReference type="EnsemblBacteria" id="CAB15867">
    <property type="protein sequence ID" value="CAB15867"/>
    <property type="gene ID" value="BSU_38410"/>
</dbReference>
<dbReference type="GeneID" id="937333"/>
<dbReference type="KEGG" id="bsu:BSU38410"/>
<dbReference type="PATRIC" id="fig|224308.179.peg.4158"/>
<dbReference type="eggNOG" id="COG1263">
    <property type="taxonomic scope" value="Bacteria"/>
</dbReference>
<dbReference type="eggNOG" id="COG1264">
    <property type="taxonomic scope" value="Bacteria"/>
</dbReference>
<dbReference type="InParanoid" id="P15400"/>
<dbReference type="OrthoDB" id="9769191at2"/>
<dbReference type="PhylomeDB" id="P15400"/>
<dbReference type="BioCyc" id="BSUB:BSU38410-MONOMER"/>
<dbReference type="Proteomes" id="UP000001570">
    <property type="component" value="Chromosome"/>
</dbReference>
<dbReference type="GO" id="GO:0005886">
    <property type="term" value="C:plasma membrane"/>
    <property type="evidence" value="ECO:0000318"/>
    <property type="project" value="GO_Central"/>
</dbReference>
<dbReference type="GO" id="GO:0016301">
    <property type="term" value="F:kinase activity"/>
    <property type="evidence" value="ECO:0007669"/>
    <property type="project" value="UniProtKB-KW"/>
</dbReference>
<dbReference type="GO" id="GO:0008982">
    <property type="term" value="F:protein-N(PI)-phosphohistidine-sugar phosphotransferase activity"/>
    <property type="evidence" value="ECO:0007669"/>
    <property type="project" value="InterPro"/>
</dbReference>
<dbReference type="GO" id="GO:0090589">
    <property type="term" value="F:protein-phosphocysteine-trehalose phosphotransferase system transporter activity"/>
    <property type="evidence" value="ECO:0000318"/>
    <property type="project" value="GO_Central"/>
</dbReference>
<dbReference type="GO" id="GO:0009401">
    <property type="term" value="P:phosphoenolpyruvate-dependent sugar phosphotransferase system"/>
    <property type="evidence" value="ECO:0000318"/>
    <property type="project" value="GO_Central"/>
</dbReference>
<dbReference type="GO" id="GO:0015771">
    <property type="term" value="P:trehalose transport"/>
    <property type="evidence" value="ECO:0000318"/>
    <property type="project" value="GO_Central"/>
</dbReference>
<dbReference type="CDD" id="cd00212">
    <property type="entry name" value="PTS_IIB_glc"/>
    <property type="match status" value="1"/>
</dbReference>
<dbReference type="FunFam" id="3.30.1360.60:FF:000001">
    <property type="entry name" value="PTS system glucose-specific IIBC component PtsG"/>
    <property type="match status" value="1"/>
</dbReference>
<dbReference type="Gene3D" id="3.30.1360.60">
    <property type="entry name" value="Glucose permease domain IIB"/>
    <property type="match status" value="1"/>
</dbReference>
<dbReference type="InterPro" id="IPR036878">
    <property type="entry name" value="Glu_permease_IIB"/>
</dbReference>
<dbReference type="InterPro" id="IPR018113">
    <property type="entry name" value="PTrfase_EIIB_Cys"/>
</dbReference>
<dbReference type="InterPro" id="IPR003352">
    <property type="entry name" value="PTS_EIIC"/>
</dbReference>
<dbReference type="InterPro" id="IPR013013">
    <property type="entry name" value="PTS_EIIC_1"/>
</dbReference>
<dbReference type="InterPro" id="IPR001996">
    <property type="entry name" value="PTS_IIB_1"/>
</dbReference>
<dbReference type="InterPro" id="IPR010973">
    <property type="entry name" value="PTS_IIBC_sucr"/>
</dbReference>
<dbReference type="InterPro" id="IPR050558">
    <property type="entry name" value="PTS_Sugar-Specific_Components"/>
</dbReference>
<dbReference type="NCBIfam" id="TIGR01996">
    <property type="entry name" value="PTS-II-BC-sucr"/>
    <property type="match status" value="1"/>
</dbReference>
<dbReference type="PANTHER" id="PTHR30175:SF7">
    <property type="entry name" value="NEGATIVE REGULATOR OF SACY ACTIVITY"/>
    <property type="match status" value="1"/>
</dbReference>
<dbReference type="PANTHER" id="PTHR30175">
    <property type="entry name" value="PHOSPHOTRANSFERASE SYSTEM TRANSPORT PROTEIN"/>
    <property type="match status" value="1"/>
</dbReference>
<dbReference type="Pfam" id="PF00367">
    <property type="entry name" value="PTS_EIIB"/>
    <property type="match status" value="1"/>
</dbReference>
<dbReference type="Pfam" id="PF02378">
    <property type="entry name" value="PTS_EIIC"/>
    <property type="match status" value="1"/>
</dbReference>
<dbReference type="SUPFAM" id="SSF55604">
    <property type="entry name" value="Glucose permease domain IIB"/>
    <property type="match status" value="1"/>
</dbReference>
<dbReference type="PROSITE" id="PS51098">
    <property type="entry name" value="PTS_EIIB_TYPE_1"/>
    <property type="match status" value="1"/>
</dbReference>
<dbReference type="PROSITE" id="PS01035">
    <property type="entry name" value="PTS_EIIB_TYPE_1_CYS"/>
    <property type="match status" value="1"/>
</dbReference>
<dbReference type="PROSITE" id="PS51103">
    <property type="entry name" value="PTS_EIIC_TYPE_1"/>
    <property type="match status" value="1"/>
</dbReference>
<accession>P15400</accession>
<comment type="function">
    <text evidence="3 4 5">The phosphoenolpyruvate-dependent sugar phosphotransferase system (sugar PTS), a major carbohydrate active -transport system, catalyzes the phosphorylation of incoming sugar substrates concomitantly with their translocation across the cell membrane (Probable). This system may be involved in sucrose transport (PubMed:11580842). The EIIB domain is mainly phosphorylated by the EIIA domains of GamP and PtsA/YpqE (PubMed:30038046).</text>
</comment>
<comment type="function">
    <text evidence="3">Negatively regulates SacY activity by catalyzing its phosphorylation on 'His-99'.</text>
</comment>
<comment type="subcellular location">
    <subcellularLocation>
        <location evidence="2">Cell membrane</location>
        <topology evidence="2">Multi-pass membrane protein</topology>
    </subcellularLocation>
</comment>
<comment type="domain">
    <text>The PTS EIIB type-2 domain may serve a regulatory function, through its phosphorylation activity.</text>
</comment>
<comment type="domain">
    <text evidence="1">The PTS EIIB type-1 domain is phosphorylated by phospho-EIIA on a cysteinyl residue. Then, it transfers the phosphoryl group to the sugar substrate concomitantly with the sugar uptake processed by the PTS EIIC type-1 domain.</text>
</comment>
<comment type="domain">
    <text evidence="2">The EIIC domain type-1 forms the PTS system translocation channel and contains the specific substrate-binding site.</text>
</comment>
<sequence>MHKEIAKELLLLAGGKNNIISISHCTTRLRFDVKDETKIDIHAIENLQGVQGTFFRYGLFQIIFGAGVVNKIYKEVVHVWETAPSEEPVHQKKASRKLNPAAAFAKTLSDIFVPIIPAITASGLLMGLIGMIKVFHWFAAGSPWIKMLDLVSSTAFILLPILVGFSAARQFGSNPYLGAVIAGLLTHPDLLDPSMLGSKTPSSLDIWGLHIPMMGYQGSMIPILLSVFVMSKIEKLLKSIVPKSLDVVIIPFITVMVTGCLALIVMNPAASIIGQIMTQSIVYIYDHAGIAAGALFGGIYSTIVLSGLHHSFYAIEATLLANPHVGVNFLVPIWSMANVAQGGAGLAVFLKTKQSSLKKIALPASLTAFLGIVEPIVFGVNLKLIRPFIGAAIGGAIGGAYVVAVQVVANSYGLTGIPMISIVLPFGAANFVHYMIGFLIAAVSAFIATLFLGFKEETE</sequence>